<gene>
    <name type="primary">RAD51C</name>
    <name type="synonym">RAD51L2</name>
</gene>
<dbReference type="EMBL" id="AJ413202">
    <property type="protein sequence ID" value="CAC88355.1"/>
    <property type="molecule type" value="mRNA"/>
</dbReference>
<dbReference type="EMBL" id="AJ428572">
    <property type="protein sequence ID" value="CAD21699.1"/>
    <property type="molecule type" value="mRNA"/>
</dbReference>
<dbReference type="RefSeq" id="NP_001231005.1">
    <molecule id="Q8R2J9-1"/>
    <property type="nucleotide sequence ID" value="NM_001244076.1"/>
</dbReference>
<dbReference type="RefSeq" id="XP_007642544.1">
    <molecule id="Q8R2J9-1"/>
    <property type="nucleotide sequence ID" value="XM_007644354.2"/>
</dbReference>
<dbReference type="RefSeq" id="XP_007642545.1">
    <molecule id="Q8R2J9-1"/>
    <property type="nucleotide sequence ID" value="XM_007644355.2"/>
</dbReference>
<dbReference type="RefSeq" id="XP_007642546.1">
    <molecule id="Q8R2J9-1"/>
    <property type="nucleotide sequence ID" value="XM_007644356.2"/>
</dbReference>
<dbReference type="SMR" id="Q8R2J9"/>
<dbReference type="PaxDb" id="10029-NP_001231005.1"/>
<dbReference type="Ensembl" id="ENSCGRT00001010694.1">
    <molecule id="Q8R2J9-1"/>
    <property type="protein sequence ID" value="ENSCGRP00001006776.1"/>
    <property type="gene ID" value="ENSCGRG00001009215.1"/>
</dbReference>
<dbReference type="GeneID" id="100689078"/>
<dbReference type="KEGG" id="cge:100689078"/>
<dbReference type="CTD" id="5889"/>
<dbReference type="eggNOG" id="KOG1434">
    <property type="taxonomic scope" value="Eukaryota"/>
</dbReference>
<dbReference type="GeneTree" id="ENSGT00940000156805"/>
<dbReference type="OMA" id="AMETFTV"/>
<dbReference type="OrthoDB" id="5957327at2759"/>
<dbReference type="Proteomes" id="UP000694386">
    <property type="component" value="Unplaced"/>
</dbReference>
<dbReference type="Proteomes" id="UP001108280">
    <property type="component" value="Chromosome 7"/>
</dbReference>
<dbReference type="GO" id="GO:0030054">
    <property type="term" value="C:cell junction"/>
    <property type="evidence" value="ECO:0007669"/>
    <property type="project" value="Ensembl"/>
</dbReference>
<dbReference type="GO" id="GO:0005737">
    <property type="term" value="C:cytoplasm"/>
    <property type="evidence" value="ECO:0000250"/>
    <property type="project" value="UniProtKB"/>
</dbReference>
<dbReference type="GO" id="GO:0005829">
    <property type="term" value="C:cytosol"/>
    <property type="evidence" value="ECO:0007669"/>
    <property type="project" value="Ensembl"/>
</dbReference>
<dbReference type="GO" id="GO:0005739">
    <property type="term" value="C:mitochondrion"/>
    <property type="evidence" value="ECO:0007669"/>
    <property type="project" value="UniProtKB-SubCell"/>
</dbReference>
<dbReference type="GO" id="GO:0005654">
    <property type="term" value="C:nucleoplasm"/>
    <property type="evidence" value="ECO:0007669"/>
    <property type="project" value="Ensembl"/>
</dbReference>
<dbReference type="GO" id="GO:0005634">
    <property type="term" value="C:nucleus"/>
    <property type="evidence" value="ECO:0000250"/>
    <property type="project" value="UniProtKB"/>
</dbReference>
<dbReference type="GO" id="GO:0048471">
    <property type="term" value="C:perinuclear region of cytoplasm"/>
    <property type="evidence" value="ECO:0000250"/>
    <property type="project" value="UniProtKB"/>
</dbReference>
<dbReference type="GO" id="GO:0033063">
    <property type="term" value="C:Rad51B-Rad51C-Rad51D-XRCC2 complex"/>
    <property type="evidence" value="ECO:0000250"/>
    <property type="project" value="UniProtKB"/>
</dbReference>
<dbReference type="GO" id="GO:0033065">
    <property type="term" value="C:Rad51C-XRCC3 complex"/>
    <property type="evidence" value="ECO:0000250"/>
    <property type="project" value="UniProtKB"/>
</dbReference>
<dbReference type="GO" id="GO:0005657">
    <property type="term" value="C:replication fork"/>
    <property type="evidence" value="ECO:0000250"/>
    <property type="project" value="UniProtKB"/>
</dbReference>
<dbReference type="GO" id="GO:0005524">
    <property type="term" value="F:ATP binding"/>
    <property type="evidence" value="ECO:0007669"/>
    <property type="project" value="UniProtKB-KW"/>
</dbReference>
<dbReference type="GO" id="GO:0140664">
    <property type="term" value="F:ATP-dependent DNA damage sensor activity"/>
    <property type="evidence" value="ECO:0007669"/>
    <property type="project" value="InterPro"/>
</dbReference>
<dbReference type="GO" id="GO:0008821">
    <property type="term" value="F:crossover junction DNA endonuclease activity"/>
    <property type="evidence" value="ECO:0007669"/>
    <property type="project" value="Ensembl"/>
</dbReference>
<dbReference type="GO" id="GO:0000400">
    <property type="term" value="F:four-way junction DNA binding"/>
    <property type="evidence" value="ECO:0007669"/>
    <property type="project" value="Ensembl"/>
</dbReference>
<dbReference type="GO" id="GO:0006310">
    <property type="term" value="P:DNA recombination"/>
    <property type="evidence" value="ECO:0000250"/>
    <property type="project" value="UniProtKB"/>
</dbReference>
<dbReference type="GO" id="GO:0006281">
    <property type="term" value="P:DNA repair"/>
    <property type="evidence" value="ECO:0000250"/>
    <property type="project" value="UniProtKB"/>
</dbReference>
<dbReference type="GO" id="GO:0000724">
    <property type="term" value="P:double-strand break repair via homologous recombination"/>
    <property type="evidence" value="ECO:0000250"/>
    <property type="project" value="UniProtKB"/>
</dbReference>
<dbReference type="GO" id="GO:0007066">
    <property type="term" value="P:female meiosis sister chromatid cohesion"/>
    <property type="evidence" value="ECO:0007669"/>
    <property type="project" value="Ensembl"/>
</dbReference>
<dbReference type="GO" id="GO:0007141">
    <property type="term" value="P:male meiosis I"/>
    <property type="evidence" value="ECO:0007669"/>
    <property type="project" value="Ensembl"/>
</dbReference>
<dbReference type="GO" id="GO:0000707">
    <property type="term" value="P:meiotic DNA recombinase assembly"/>
    <property type="evidence" value="ECO:0007669"/>
    <property type="project" value="TreeGrafter"/>
</dbReference>
<dbReference type="GO" id="GO:0010971">
    <property type="term" value="P:positive regulation of G2/M transition of mitotic cell cycle"/>
    <property type="evidence" value="ECO:0000250"/>
    <property type="project" value="UniProtKB"/>
</dbReference>
<dbReference type="GO" id="GO:0007131">
    <property type="term" value="P:reciprocal meiotic recombination"/>
    <property type="evidence" value="ECO:0007669"/>
    <property type="project" value="Ensembl"/>
</dbReference>
<dbReference type="GO" id="GO:0007062">
    <property type="term" value="P:sister chromatid cohesion"/>
    <property type="evidence" value="ECO:0000315"/>
    <property type="project" value="UniProtKB"/>
</dbReference>
<dbReference type="GO" id="GO:0007283">
    <property type="term" value="P:spermatogenesis"/>
    <property type="evidence" value="ECO:0007669"/>
    <property type="project" value="Ensembl"/>
</dbReference>
<dbReference type="GO" id="GO:0000722">
    <property type="term" value="P:telomere maintenance via recombination"/>
    <property type="evidence" value="ECO:0007669"/>
    <property type="project" value="Ensembl"/>
</dbReference>
<dbReference type="CDD" id="cd19492">
    <property type="entry name" value="Rad51C"/>
    <property type="match status" value="1"/>
</dbReference>
<dbReference type="FunFam" id="3.40.50.300:FF:001103">
    <property type="entry name" value="DNA repair protein RAD51 homolog 3"/>
    <property type="match status" value="1"/>
</dbReference>
<dbReference type="Gene3D" id="3.40.50.300">
    <property type="entry name" value="P-loop containing nucleotide triphosphate hydrolases"/>
    <property type="match status" value="1"/>
</dbReference>
<dbReference type="InterPro" id="IPR013632">
    <property type="entry name" value="DNA_recomb/repair_Rad51_C"/>
</dbReference>
<dbReference type="InterPro" id="IPR016467">
    <property type="entry name" value="DNA_recomb/repair_RecA-like"/>
</dbReference>
<dbReference type="InterPro" id="IPR052093">
    <property type="entry name" value="HR_Repair_Mediator"/>
</dbReference>
<dbReference type="InterPro" id="IPR027417">
    <property type="entry name" value="P-loop_NTPase"/>
</dbReference>
<dbReference type="InterPro" id="IPR020588">
    <property type="entry name" value="RecA_ATP-bd"/>
</dbReference>
<dbReference type="PANTHER" id="PTHR46239:SF1">
    <property type="entry name" value="DNA REPAIR PROTEIN RAD51 HOMOLOG 3"/>
    <property type="match status" value="1"/>
</dbReference>
<dbReference type="PANTHER" id="PTHR46239">
    <property type="entry name" value="DNA REPAIR PROTEIN RAD51 HOMOLOG 3 RAD51C"/>
    <property type="match status" value="1"/>
</dbReference>
<dbReference type="Pfam" id="PF08423">
    <property type="entry name" value="Rad51"/>
    <property type="match status" value="1"/>
</dbReference>
<dbReference type="PIRSF" id="PIRSF005856">
    <property type="entry name" value="Rad51"/>
    <property type="match status" value="1"/>
</dbReference>
<dbReference type="SUPFAM" id="SSF52540">
    <property type="entry name" value="P-loop containing nucleoside triphosphate hydrolases"/>
    <property type="match status" value="1"/>
</dbReference>
<dbReference type="PROSITE" id="PS50162">
    <property type="entry name" value="RECA_2"/>
    <property type="match status" value="1"/>
</dbReference>
<protein>
    <recommendedName>
        <fullName>DNA repair protein RAD51 homolog 3</fullName>
        <shortName>R51H3</shortName>
    </recommendedName>
    <alternativeName>
        <fullName>RAD51 homolog C</fullName>
    </alternativeName>
    <alternativeName>
        <fullName>RAD51-like protein 2</fullName>
    </alternativeName>
</protein>
<keyword id="KW-0025">Alternative splicing</keyword>
<keyword id="KW-0067">ATP-binding</keyword>
<keyword id="KW-0963">Cytoplasm</keyword>
<keyword id="KW-0227">DNA damage</keyword>
<keyword id="KW-0233">DNA recombination</keyword>
<keyword id="KW-0234">DNA repair</keyword>
<keyword id="KW-0238">DNA-binding</keyword>
<keyword id="KW-0496">Mitochondrion</keyword>
<keyword id="KW-0547">Nucleotide-binding</keyword>
<keyword id="KW-0539">Nucleus</keyword>
<keyword id="KW-0597">Phosphoprotein</keyword>
<name>RA51C_CRIGR</name>
<evidence type="ECO:0000250" key="1">
    <source>
        <dbReference type="UniProtKB" id="O43502"/>
    </source>
</evidence>
<evidence type="ECO:0000255" key="2"/>
<evidence type="ECO:0000256" key="3">
    <source>
        <dbReference type="SAM" id="MobiDB-lite"/>
    </source>
</evidence>
<evidence type="ECO:0000269" key="4">
    <source>
    </source>
</evidence>
<evidence type="ECO:0000269" key="5">
    <source>
    </source>
</evidence>
<evidence type="ECO:0000269" key="6">
    <source>
    </source>
</evidence>
<evidence type="ECO:0000269" key="7">
    <source>
    </source>
</evidence>
<evidence type="ECO:0000305" key="8"/>
<proteinExistence type="evidence at transcript level"/>
<accession>Q8R2J9</accession>
<accession>Q8VDE9</accession>
<feature type="chain" id="PRO_0000402422" description="DNA repair protein RAD51 homolog 3">
    <location>
        <begin position="1"/>
        <end position="366"/>
    </location>
</feature>
<feature type="region of interest" description="Required for Holliday junction resolution activity">
    <location>
        <begin position="1"/>
        <end position="117"/>
    </location>
</feature>
<feature type="region of interest" description="Interaction with RAD51B, RAD51D and XRCC3">
    <location>
        <begin position="70"/>
        <end position="127"/>
    </location>
</feature>
<feature type="region of interest" description="Disordered" evidence="3">
    <location>
        <begin position="338"/>
        <end position="366"/>
    </location>
</feature>
<feature type="short sequence motif" description="Nuclear localization signal" evidence="2">
    <location>
        <begin position="356"/>
        <end position="360"/>
    </location>
</feature>
<feature type="compositionally biased region" description="Polar residues" evidence="3">
    <location>
        <begin position="343"/>
        <end position="354"/>
    </location>
</feature>
<feature type="binding site" evidence="2">
    <location>
        <begin position="116"/>
        <end position="123"/>
    </location>
    <ligand>
        <name>ATP</name>
        <dbReference type="ChEBI" id="CHEBI:30616"/>
    </ligand>
</feature>
<feature type="modified residue" description="Phosphoserine" evidence="1">
    <location>
        <position position="11"/>
    </location>
</feature>
<feature type="splice variant" id="VSP_040285" description="In isoform 2." evidence="8">
    <location>
        <begin position="227"/>
        <end position="270"/>
    </location>
</feature>
<comment type="function">
    <text evidence="4 5 6 7">Essential for the homologous recombination (HR) pathway of DNA repair. Involved in the homologous recombination repair (HRR) pathway of double-stranded DNA breaks arising during DNA replication or induced by DNA-damaging agents. Part of the RAD51 paralog protein complexes BCDX2 and CX3 which act at different stages of the BRCA1-BRCA2-dependent HR pathway. Upon DNA damage, BCDX2 seems to act downstream of BRCA2 recruitment and upstream of RAD51 recruitment; CX3 seems to act downstream of RAD51 recruitment; both complexes bind predominantly to the intersection of the four duplex arms of the Holliday junction (HJ) and to junction of replication forks. The BCDX2 complex was originally reported to bind single-stranded DNA, single-stranded gaps in duplex DNA and specifically to nicks in duplex DNA. The BCDX2 subcomplex RAD51B:RAD51C exhibits single-stranded DNA-dependent ATPase activity suggesting an involvement in early stages of the HR pathway. Involved in RAD51 foci formation in response to DNA damage suggesting an involvement in early stages of HR probably in the invasion step. Has an early function in DNA repair in facilitating phosphorylation of the checkpoint kinase CHEK2 and thereby transduction of the damage signal, leading to cell cycle arrest and HR activation. Participates in branch migration and HJ resolution and thus is important for processing HR intermediates late in the DNA repair process; the function may be linked to the CX3 complex. Part of a PALB2-scaffolded HR complex containing BRCA2 and which is thought to play a role in DNA repair by HR. Protects RAD51 from ubiquitin-mediated degradation that is enhanced following DNA damage. Plays a role in regulating mitochondrial DNA copy number under conditions of oxidative stress in the presence of RAD51 and XRCC3. Contributes to DNA cross-link resistance, sister chromatid cohesion and genomic stability. Involved in maintaining centrosome number in mitosis.</text>
</comment>
<comment type="subunit">
    <text evidence="1">Part of the RAD51 paralog protein complexes BCDX2 and CX3; the complexes have a ring-like structure arranged into a flat disc around a central channel. The BCDX2 complex consits of RAD51B, RAD51C, RAD51D and XRCC2; the CX3 complex consists of RAD51C and XRCC3. The BCDX2 subcomplex RAD51B:RAD51C interacts with RAD51. Interacts with SWSAP1; involved in homologous recombination repair. Interacts directly with PALB2 which may serve as a scaffold for a HR complex containing PALB2, BRCA2, RAD51C, RAD51 and XRCC3. Interacts with HELQ.</text>
</comment>
<comment type="subcellular location">
    <subcellularLocation>
        <location evidence="1">Nucleus</location>
    </subcellularLocation>
    <subcellularLocation>
        <location evidence="1">Cytoplasm</location>
    </subcellularLocation>
    <subcellularLocation>
        <location evidence="1">Cytoplasm</location>
        <location evidence="1">Perinuclear region</location>
    </subcellularLocation>
    <subcellularLocation>
        <location evidence="1">Mitochondrion</location>
    </subcellularLocation>
    <text evidence="1">DNA damage induces an increase in nuclear levels. Accumulates in DNA damage induced nuclear foci or RAD51C foci which is formed during the S or G2 phase of cell cycle. Accumulation at DNA lesions requires the presence of NBN/NBS1, ATM and RPA.</text>
</comment>
<comment type="alternative products">
    <event type="alternative splicing"/>
    <isoform>
        <id>Q8R2J9-1</id>
        <name>1</name>
        <sequence type="displayed"/>
    </isoform>
    <isoform>
        <id>Q8R2J9-2</id>
        <name>2</name>
        <sequence type="described" ref="VSP_040285"/>
    </isoform>
</comment>
<comment type="similarity">
    <text evidence="8">Belongs to the RecA family. RAD51 subfamily.</text>
</comment>
<sequence length="366" mass="40381">MQRELVSFPLSPTVRVKLVAAGFQTAEDVLGVKPSELSKEVGISKEEALETLQIVRRESLTDKPRCAGASVAGKKYTALELLEQEHTQGFIITFCSALDNILGGGIPLMKTTEVCGVPGVGKTQLCMQLAVDVQIPECFGGVAGEAVFIDTEGSFMVDRVVTLANACIQHLHLIAGTHKDEEHQKALEGFTLENILSHIYYFRCHDYTELLAQVYLLPDFLSNHSKVQLVIIDGIALPFRHDLDDLSLRTRLLNGLAQQMISLANNHRLAVILTNQMTTKIDKNQALLVPALGESWGHAATIRLIFHWEQKQRFATLYKSPSQKESTIPFQITPQGFRDAAVTASSSQTEGSSNLRKRSREPEEGC</sequence>
<reference key="1">
    <citation type="journal article" date="2002" name="J. Biol. Chem.">
        <title>Role of mammalian RAD51L2 (RAD51C) in recombination and genetic stability.</title>
        <authorList>
            <person name="French C.A."/>
            <person name="Masson J.Y."/>
            <person name="Griffin C.S."/>
            <person name="O'Regan P."/>
            <person name="West S.C."/>
            <person name="Thacker J."/>
        </authorList>
    </citation>
    <scope>NUCLEOTIDE SEQUENCE [MRNA] (ISOFORM 1)</scope>
    <scope>FUNCTION</scope>
</reference>
<reference key="2">
    <citation type="journal article" date="2002" name="Nucleic Acids Res.">
        <title>Mammalian Rad51C contributes to DNA cross-link resistance, sister chromatid cohesion and genomic stability.</title>
        <authorList>
            <person name="Godthelp B.C."/>
            <person name="Wiegant W.W."/>
            <person name="van Duijn-Goedhart A."/>
            <person name="Scharer O.D."/>
            <person name="van Buul P.P.W."/>
            <person name="Kanaar R."/>
            <person name="Zdzienicka M.Z."/>
        </authorList>
    </citation>
    <scope>NUCLEOTIDE SEQUENCE [MRNA] OF 45-349 (ISOFORM 1)</scope>
    <scope>IDENTIFICATION OF ISOFORM 2</scope>
    <scope>FUNCTION</scope>
    <source>
        <tissue>Lung</tissue>
    </source>
</reference>
<reference key="3">
    <citation type="journal article" date="2007" name="Cytogenet. Genome Res.">
        <title>RAD51C (RAD51L2) is involved in maintaining centrosome number in mitosis.</title>
        <authorList>
            <person name="Renglin Lindh A."/>
            <person name="Schultz N."/>
            <person name="Saleh-Gohari N."/>
            <person name="Helleday T."/>
        </authorList>
    </citation>
    <scope>FUNCTION</scope>
</reference>
<reference key="4">
    <citation type="journal article" date="2010" name="Mutat. Res.">
        <title>Rad51C is essential for embryonic development and haploinsufficiency causes increased DNA damage sensitivity and genomic instability.</title>
        <authorList>
            <person name="Smeenk G."/>
            <person name="de Groot A.J."/>
            <person name="Romeijn R.J."/>
            <person name="van Buul P.P."/>
            <person name="Zdzienicka M.Z."/>
            <person name="Mullenders L.H."/>
            <person name="Pastink A."/>
            <person name="Godthelp B.C."/>
        </authorList>
    </citation>
    <scope>FUNCTION</scope>
</reference>
<organism>
    <name type="scientific">Cricetulus griseus</name>
    <name type="common">Chinese hamster</name>
    <name type="synonym">Cricetulus barabensis griseus</name>
    <dbReference type="NCBI Taxonomy" id="10029"/>
    <lineage>
        <taxon>Eukaryota</taxon>
        <taxon>Metazoa</taxon>
        <taxon>Chordata</taxon>
        <taxon>Craniata</taxon>
        <taxon>Vertebrata</taxon>
        <taxon>Euteleostomi</taxon>
        <taxon>Mammalia</taxon>
        <taxon>Eutheria</taxon>
        <taxon>Euarchontoglires</taxon>
        <taxon>Glires</taxon>
        <taxon>Rodentia</taxon>
        <taxon>Myomorpha</taxon>
        <taxon>Muroidea</taxon>
        <taxon>Cricetidae</taxon>
        <taxon>Cricetinae</taxon>
        <taxon>Cricetulus</taxon>
    </lineage>
</organism>